<evidence type="ECO:0000250" key="1"/>
<evidence type="ECO:0000305" key="2"/>
<geneLocation type="chloroplast"/>
<proteinExistence type="inferred from homology"/>
<protein>
    <recommendedName>
        <fullName>Light-independent protochlorophyllide reductase subunit B</fullName>
        <shortName>DPOR subunit B</shortName>
        <shortName>LI-POR subunit B</shortName>
        <ecNumber>1.3.7.7</ecNumber>
    </recommendedName>
</protein>
<feature type="chain" id="PRO_0000219827" description="Light-independent protochlorophyllide reductase subunit B">
    <location>
        <begin position="1" status="less than"/>
        <end position="103" status="greater than"/>
    </location>
</feature>
<feature type="non-terminal residue">
    <location>
        <position position="1"/>
    </location>
</feature>
<feature type="non-terminal residue">
    <location>
        <position position="103"/>
    </location>
</feature>
<name>CHLB_SPIAN</name>
<dbReference type="EC" id="1.3.7.7"/>
<dbReference type="EMBL" id="L25767">
    <property type="protein sequence ID" value="AAC37488.1"/>
    <property type="molecule type" value="Genomic_DNA"/>
</dbReference>
<dbReference type="SMR" id="P37847"/>
<dbReference type="UniPathway" id="UPA00670"/>
<dbReference type="GO" id="GO:0009507">
    <property type="term" value="C:chloroplast"/>
    <property type="evidence" value="ECO:0007669"/>
    <property type="project" value="UniProtKB-SubCell"/>
</dbReference>
<dbReference type="GO" id="GO:0051539">
    <property type="term" value="F:4 iron, 4 sulfur cluster binding"/>
    <property type="evidence" value="ECO:0007669"/>
    <property type="project" value="UniProtKB-KW"/>
</dbReference>
<dbReference type="GO" id="GO:0005524">
    <property type="term" value="F:ATP binding"/>
    <property type="evidence" value="ECO:0007669"/>
    <property type="project" value="UniProtKB-KW"/>
</dbReference>
<dbReference type="GO" id="GO:0046872">
    <property type="term" value="F:metal ion binding"/>
    <property type="evidence" value="ECO:0007669"/>
    <property type="project" value="UniProtKB-KW"/>
</dbReference>
<dbReference type="GO" id="GO:0016491">
    <property type="term" value="F:oxidoreductase activity"/>
    <property type="evidence" value="ECO:0007669"/>
    <property type="project" value="UniProtKB-KW"/>
</dbReference>
<dbReference type="GO" id="GO:0036068">
    <property type="term" value="P:light-independent chlorophyll biosynthetic process"/>
    <property type="evidence" value="ECO:0007669"/>
    <property type="project" value="UniProtKB-UniPathway"/>
</dbReference>
<dbReference type="GO" id="GO:0015979">
    <property type="term" value="P:photosynthesis"/>
    <property type="evidence" value="ECO:0007669"/>
    <property type="project" value="UniProtKB-KW"/>
</dbReference>
<dbReference type="Gene3D" id="3.40.50.1980">
    <property type="entry name" value="Nitrogenase molybdenum iron protein domain"/>
    <property type="match status" value="1"/>
</dbReference>
<dbReference type="InterPro" id="IPR050152">
    <property type="entry name" value="ChlB/BchB/BchZ"/>
</dbReference>
<dbReference type="InterPro" id="IPR000510">
    <property type="entry name" value="Nase/OxRdtase_comp1"/>
</dbReference>
<dbReference type="PANTHER" id="PTHR33712">
    <property type="entry name" value="LIGHT-INDEPENDENT PROTOCHLOROPHYLLIDE REDUCTASE SUBUNIT B"/>
    <property type="match status" value="1"/>
</dbReference>
<dbReference type="PANTHER" id="PTHR33712:SF7">
    <property type="entry name" value="LIGHT-INDEPENDENT PROTOCHLOROPHYLLIDE REDUCTASE SUBUNIT B"/>
    <property type="match status" value="1"/>
</dbReference>
<dbReference type="Pfam" id="PF00148">
    <property type="entry name" value="Oxidored_nitro"/>
    <property type="match status" value="1"/>
</dbReference>
<dbReference type="SUPFAM" id="SSF53807">
    <property type="entry name" value="Helical backbone' metal receptor"/>
    <property type="match status" value="1"/>
</dbReference>
<keyword id="KW-0004">4Fe-4S</keyword>
<keyword id="KW-0067">ATP-binding</keyword>
<keyword id="KW-0149">Chlorophyll biosynthesis</keyword>
<keyword id="KW-0150">Chloroplast</keyword>
<keyword id="KW-0408">Iron</keyword>
<keyword id="KW-0411">Iron-sulfur</keyword>
<keyword id="KW-0479">Metal-binding</keyword>
<keyword id="KW-0547">Nucleotide-binding</keyword>
<keyword id="KW-0560">Oxidoreductase</keyword>
<keyword id="KW-0602">Photosynthesis</keyword>
<keyword id="KW-0934">Plastid</keyword>
<organism>
    <name type="scientific">Spinulum annotinum</name>
    <name type="common">Stiff clubmoss</name>
    <name type="synonym">Lycopodium annotinum</name>
    <dbReference type="NCBI Taxonomy" id="13840"/>
    <lineage>
        <taxon>Eukaryota</taxon>
        <taxon>Viridiplantae</taxon>
        <taxon>Streptophyta</taxon>
        <taxon>Embryophyta</taxon>
        <taxon>Tracheophyta</taxon>
        <taxon>Lycopodiopsida</taxon>
        <taxon>Lycopodiales</taxon>
        <taxon>Lycopodiaceae</taxon>
        <taxon>Lycopodioideae</taxon>
        <taxon>Spinulum</taxon>
    </lineage>
</organism>
<gene>
    <name type="primary">chlB</name>
</gene>
<comment type="function">
    <text evidence="1">Component of the dark-operative protochlorophyllide reductase (DPOR) that uses Mg-ATP and reduced ferredoxin to reduce ring D of protochlorophyllide (Pchlide) to form chlorophyllide a (Chlide). This reaction is light-independent. The NB-protein (ChlN-ChlB) is the catalytic component of the complex (By similarity).</text>
</comment>
<comment type="catalytic activity">
    <reaction>
        <text>chlorophyllide a + oxidized 2[4Fe-4S]-[ferredoxin] + 2 ADP + 2 phosphate = protochlorophyllide a + reduced 2[4Fe-4S]-[ferredoxin] + 2 ATP + 2 H2O</text>
        <dbReference type="Rhea" id="RHEA:28202"/>
        <dbReference type="Rhea" id="RHEA-COMP:10002"/>
        <dbReference type="Rhea" id="RHEA-COMP:10004"/>
        <dbReference type="ChEBI" id="CHEBI:15377"/>
        <dbReference type="ChEBI" id="CHEBI:30616"/>
        <dbReference type="ChEBI" id="CHEBI:33722"/>
        <dbReference type="ChEBI" id="CHEBI:33723"/>
        <dbReference type="ChEBI" id="CHEBI:43474"/>
        <dbReference type="ChEBI" id="CHEBI:83348"/>
        <dbReference type="ChEBI" id="CHEBI:83350"/>
        <dbReference type="ChEBI" id="CHEBI:456216"/>
        <dbReference type="EC" id="1.3.7.7"/>
    </reaction>
</comment>
<comment type="cofactor">
    <cofactor evidence="1">
        <name>[4Fe-4S] cluster</name>
        <dbReference type="ChEBI" id="CHEBI:49883"/>
    </cofactor>
    <text evidence="1">Binds 1 [4Fe-4S] cluster per heterodimer. The cluster is bound at the heterodimer interface by residues from both subunits.</text>
</comment>
<comment type="pathway">
    <text>Porphyrin-containing compound metabolism; chlorophyll biosynthesis (light-independent).</text>
</comment>
<comment type="subunit">
    <text evidence="1">Protochlorophyllide reductase is composed of three subunits; ChlL, ChlN and ChlB. Forms a heterotetramer of two ChlB and two ChlN subunits (By similarity).</text>
</comment>
<comment type="subcellular location">
    <subcellularLocation>
        <location>Plastid</location>
        <location>Chloroplast</location>
    </subcellularLocation>
</comment>
<comment type="similarity">
    <text evidence="2">Belongs to the ChlB/BchB/BchZ family.</text>
</comment>
<reference key="1">
    <citation type="journal article" date="1996" name="Mol. Phylogenet. Evol.">
        <title>Phylogenetic inferences from chloroplast chlB gene sequences of Nephrolepis exaltata (Filicopsida), Ephedra altissima (Gnetopsida), and diverse land plants.</title>
        <authorList>
            <person name="Boivin R."/>
            <person name="Richard M."/>
            <person name="Beauseigle D."/>
            <person name="Bousquet J."/>
            <person name="Bellemare G."/>
        </authorList>
    </citation>
    <scope>NUCLEOTIDE SEQUENCE [GENOMIC DNA]</scope>
</reference>
<accession>P37847</accession>
<sequence>KRLLQNLGIEINQVIPEGGFIEDLQNLPKAWFNFVPYREIGLMTAVYLEKEFGMPYVSITPMGIVDTAECIRQIQKHINELAVVSLEETVDYEPYIYQQTKFV</sequence>